<gene>
    <name type="primary">CEP19</name>
</gene>
<sequence>MMCTAKKCGIRFQPPAIILIYENEIKGKSRQRIMPVRNFSKYSDCSRAAEQLKNNPRHKGYLEQVSLKQLEKLFSFLRGNLWGQSLAETMEQIQRETTIDPEEDLNKLDDKELAKRKSIMDELFEKNQKKKDDPNFVYDIEVEFPQDEQLQSCGWDTESAEEF</sequence>
<name>CEP19_BOVIN</name>
<reference key="1">
    <citation type="submission" date="2007-06" db="EMBL/GenBank/DDBJ databases">
        <authorList>
            <consortium name="NIH - Mammalian Gene Collection (MGC) project"/>
        </authorList>
    </citation>
    <scope>NUCLEOTIDE SEQUENCE [LARGE SCALE MRNA]</scope>
    <source>
        <strain>Hereford</strain>
        <tissue>Basal ganglia</tissue>
    </source>
</reference>
<evidence type="ECO:0000250" key="1">
    <source>
        <dbReference type="UniProtKB" id="Q96LK0"/>
    </source>
</evidence>
<evidence type="ECO:0000305" key="2"/>
<keyword id="KW-0966">Cell projection</keyword>
<keyword id="KW-0969">Cilium</keyword>
<keyword id="KW-0970">Cilium biogenesis/degradation</keyword>
<keyword id="KW-0963">Cytoplasm</keyword>
<keyword id="KW-0206">Cytoskeleton</keyword>
<keyword id="KW-1185">Reference proteome</keyword>
<protein>
    <recommendedName>
        <fullName>Centrosomal protein of 19 kDa</fullName>
        <shortName>Cep19</shortName>
    </recommendedName>
</protein>
<accession>A6H7C9</accession>
<comment type="function">
    <text evidence="1">Required for ciliation. Recruits the RABL2B GTPase to the ciliary base to initiate ciliation. After specifically capturing the activated GTP-bound RABL2B, the CEP19-RABL2B complex binds intraflagellar transport (IFT) complex B from the large pool pre-docked at the base of the cilium and thus triggers its entry into the cilia. Involved in the early steps in cilia formation by recruiting the ciliary vesicles (CVs) to the distal end of the mother centriole where they fuse to initiate cilium assembly. Involved in microtubule (MT) anchoring at centrosomes.</text>
</comment>
<comment type="subunit">
    <text evidence="1">Interacts with CEP43; this interaction is required for its localization to the mother centriole. Interacts (via residues 121-150) with RABL2B. Interacts (via C-terminus) with CEP350; this interaction is required for its localization to the mother centriole.</text>
</comment>
<comment type="subcellular location">
    <subcellularLocation>
        <location evidence="1">Cytoplasm</location>
        <location evidence="1">Cytoskeleton</location>
        <location evidence="1">Microtubule organizing center</location>
        <location evidence="1">Centrosome</location>
        <location evidence="1">Centriole</location>
    </subcellularLocation>
    <subcellularLocation>
        <location evidence="1">Cytoplasm</location>
        <location evidence="1">Cytoskeleton</location>
        <location evidence="1">Spindle pole</location>
    </subcellularLocation>
    <subcellularLocation>
        <location evidence="1">Cytoplasm</location>
        <location evidence="1">Cytoskeleton</location>
        <location evidence="1">Cilium basal body</location>
    </subcellularLocation>
    <text evidence="1">Associates with the mother centriole in early interphase. Localizes to spindle poles during mitosis, and to distinct foci oriented towards the midbody at telophase. Localizes slightly apical to the subdistal appendage on the mother centriole, but below the distal appendage.</text>
</comment>
<comment type="similarity">
    <text evidence="2">Belongs to the CEP19 family.</text>
</comment>
<dbReference type="EMBL" id="BC146199">
    <property type="protein sequence ID" value="AAI46200.1"/>
    <property type="molecule type" value="mRNA"/>
</dbReference>
<dbReference type="RefSeq" id="NP_001092599.1">
    <property type="nucleotide sequence ID" value="NM_001099129.1"/>
</dbReference>
<dbReference type="RefSeq" id="XP_005201596.1">
    <property type="nucleotide sequence ID" value="XM_005201539.5"/>
</dbReference>
<dbReference type="RefSeq" id="XP_005201597.1">
    <property type="nucleotide sequence ID" value="XM_005201540.5"/>
</dbReference>
<dbReference type="SMR" id="A6H7C9"/>
<dbReference type="FunCoup" id="A6H7C9">
    <property type="interactions" value="578"/>
</dbReference>
<dbReference type="STRING" id="9913.ENSBTAP00000017558"/>
<dbReference type="PaxDb" id="9913-ENSBTAP00000017558"/>
<dbReference type="Ensembl" id="ENSBTAT00000017558.5">
    <property type="protein sequence ID" value="ENSBTAP00000017558.4"/>
    <property type="gene ID" value="ENSBTAG00000013192.6"/>
</dbReference>
<dbReference type="GeneID" id="613916"/>
<dbReference type="KEGG" id="bta:613916"/>
<dbReference type="CTD" id="84984"/>
<dbReference type="VEuPathDB" id="HostDB:ENSBTAG00000013192"/>
<dbReference type="VGNC" id="VGNC:27198">
    <property type="gene designation" value="CEP19"/>
</dbReference>
<dbReference type="eggNOG" id="ENOG502RZP1">
    <property type="taxonomic scope" value="Eukaryota"/>
</dbReference>
<dbReference type="GeneTree" id="ENSGT00390000016356"/>
<dbReference type="HOGENOM" id="CLU_113348_0_0_1"/>
<dbReference type="InParanoid" id="A6H7C9"/>
<dbReference type="OMA" id="AKKCGIQ"/>
<dbReference type="OrthoDB" id="2163581at2759"/>
<dbReference type="TreeFam" id="TF328425"/>
<dbReference type="Proteomes" id="UP000009136">
    <property type="component" value="Chromosome 1"/>
</dbReference>
<dbReference type="Bgee" id="ENSBTAG00000013192">
    <property type="expression patterns" value="Expressed in occipital lobe and 103 other cell types or tissues"/>
</dbReference>
<dbReference type="GO" id="GO:0005814">
    <property type="term" value="C:centriole"/>
    <property type="evidence" value="ECO:0000250"/>
    <property type="project" value="UniProtKB"/>
</dbReference>
<dbReference type="GO" id="GO:0005813">
    <property type="term" value="C:centrosome"/>
    <property type="evidence" value="ECO:0000318"/>
    <property type="project" value="GO_Central"/>
</dbReference>
<dbReference type="GO" id="GO:0036064">
    <property type="term" value="C:ciliary basal body"/>
    <property type="evidence" value="ECO:0000250"/>
    <property type="project" value="UniProtKB"/>
</dbReference>
<dbReference type="GO" id="GO:0005829">
    <property type="term" value="C:cytosol"/>
    <property type="evidence" value="ECO:0007669"/>
    <property type="project" value="Ensembl"/>
</dbReference>
<dbReference type="GO" id="GO:0005654">
    <property type="term" value="C:nucleoplasm"/>
    <property type="evidence" value="ECO:0007669"/>
    <property type="project" value="Ensembl"/>
</dbReference>
<dbReference type="GO" id="GO:0000922">
    <property type="term" value="C:spindle pole"/>
    <property type="evidence" value="ECO:0000250"/>
    <property type="project" value="UniProtKB"/>
</dbReference>
<dbReference type="GO" id="GO:0060271">
    <property type="term" value="P:cilium assembly"/>
    <property type="evidence" value="ECO:0000250"/>
    <property type="project" value="UniProtKB"/>
</dbReference>
<dbReference type="GO" id="GO:0034454">
    <property type="term" value="P:microtubule anchoring at centrosome"/>
    <property type="evidence" value="ECO:0000250"/>
    <property type="project" value="UniProtKB"/>
</dbReference>
<dbReference type="GO" id="GO:0097712">
    <property type="term" value="P:vesicle targeting, trans-Golgi to periciliary membrane compartment"/>
    <property type="evidence" value="ECO:0000250"/>
    <property type="project" value="UniProtKB"/>
</dbReference>
<dbReference type="InterPro" id="IPR029412">
    <property type="entry name" value="CEP19"/>
</dbReference>
<dbReference type="PANTHER" id="PTHR31539:SF1">
    <property type="entry name" value="CENTROSOMAL PROTEIN OF 19 KDA"/>
    <property type="match status" value="1"/>
</dbReference>
<dbReference type="PANTHER" id="PTHR31539">
    <property type="entry name" value="CENTROSOMAL PROTEIN OF 19K CEP19"/>
    <property type="match status" value="1"/>
</dbReference>
<dbReference type="Pfam" id="PF14933">
    <property type="entry name" value="CEP19"/>
    <property type="match status" value="1"/>
</dbReference>
<proteinExistence type="evidence at transcript level"/>
<organism>
    <name type="scientific">Bos taurus</name>
    <name type="common">Bovine</name>
    <dbReference type="NCBI Taxonomy" id="9913"/>
    <lineage>
        <taxon>Eukaryota</taxon>
        <taxon>Metazoa</taxon>
        <taxon>Chordata</taxon>
        <taxon>Craniata</taxon>
        <taxon>Vertebrata</taxon>
        <taxon>Euteleostomi</taxon>
        <taxon>Mammalia</taxon>
        <taxon>Eutheria</taxon>
        <taxon>Laurasiatheria</taxon>
        <taxon>Artiodactyla</taxon>
        <taxon>Ruminantia</taxon>
        <taxon>Pecora</taxon>
        <taxon>Bovidae</taxon>
        <taxon>Bovinae</taxon>
        <taxon>Bos</taxon>
    </lineage>
</organism>
<feature type="chain" id="PRO_0000360405" description="Centrosomal protein of 19 kDa">
    <location>
        <begin position="1"/>
        <end position="163"/>
    </location>
</feature>